<protein>
    <recommendedName>
        <fullName evidence="1">UPF0145 protein BDI_2732</fullName>
    </recommendedName>
</protein>
<organism>
    <name type="scientific">Parabacteroides distasonis (strain ATCC 8503 / DSM 20701 / CIP 104284 / JCM 5825 / NCTC 11152)</name>
    <dbReference type="NCBI Taxonomy" id="435591"/>
    <lineage>
        <taxon>Bacteria</taxon>
        <taxon>Pseudomonadati</taxon>
        <taxon>Bacteroidota</taxon>
        <taxon>Bacteroidia</taxon>
        <taxon>Bacteroidales</taxon>
        <taxon>Tannerellaceae</taxon>
        <taxon>Parabacteroides</taxon>
    </lineage>
</organism>
<dbReference type="EMBL" id="CP000140">
    <property type="protein sequence ID" value="ABR44451.1"/>
    <property type="molecule type" value="Genomic_DNA"/>
</dbReference>
<dbReference type="RefSeq" id="WP_005860908.1">
    <property type="nucleotide sequence ID" value="NZ_LR215978.1"/>
</dbReference>
<dbReference type="SMR" id="A6LFI7"/>
<dbReference type="STRING" id="435591.BDI_2732"/>
<dbReference type="PaxDb" id="435591-BDI_2732"/>
<dbReference type="KEGG" id="pdi:BDI_2732"/>
<dbReference type="eggNOG" id="COG0393">
    <property type="taxonomic scope" value="Bacteria"/>
</dbReference>
<dbReference type="HOGENOM" id="CLU_117144_3_2_10"/>
<dbReference type="BioCyc" id="PDIS435591:G1G5A-2807-MONOMER"/>
<dbReference type="Proteomes" id="UP000000566">
    <property type="component" value="Chromosome"/>
</dbReference>
<dbReference type="Gene3D" id="3.30.110.70">
    <property type="entry name" value="Hypothetical protein apc22750. Chain B"/>
    <property type="match status" value="1"/>
</dbReference>
<dbReference type="HAMAP" id="MF_00338">
    <property type="entry name" value="UPF0145"/>
    <property type="match status" value="1"/>
</dbReference>
<dbReference type="InterPro" id="IPR035439">
    <property type="entry name" value="UPF0145_dom_sf"/>
</dbReference>
<dbReference type="InterPro" id="IPR002765">
    <property type="entry name" value="UPF0145_YbjQ-like"/>
</dbReference>
<dbReference type="PANTHER" id="PTHR34068">
    <property type="entry name" value="UPF0145 PROTEIN YBJQ"/>
    <property type="match status" value="1"/>
</dbReference>
<dbReference type="PANTHER" id="PTHR34068:SF1">
    <property type="entry name" value="UPF0145 PROTEIN YBJQ"/>
    <property type="match status" value="1"/>
</dbReference>
<dbReference type="Pfam" id="PF01906">
    <property type="entry name" value="YbjQ_1"/>
    <property type="match status" value="1"/>
</dbReference>
<dbReference type="SUPFAM" id="SSF117782">
    <property type="entry name" value="YbjQ-like"/>
    <property type="match status" value="1"/>
</dbReference>
<proteinExistence type="inferred from homology"/>
<accession>A6LFI7</accession>
<feature type="chain" id="PRO_1000013019" description="UPF0145 protein BDI_2732">
    <location>
        <begin position="1"/>
        <end position="106"/>
    </location>
</feature>
<name>Y2732_PARD8</name>
<sequence length="106" mass="11229">MLLTTTNTIEGKEITQYFGIVSGETIIGANVFKDFFAGIRDIVGGRAGSYESVLREAKETALKEMSDHAARMGANAVIAVDLDYETVGGSGSMLMVTAAGTAVRYQ</sequence>
<comment type="similarity">
    <text evidence="1">Belongs to the UPF0145 family.</text>
</comment>
<keyword id="KW-1185">Reference proteome</keyword>
<gene>
    <name type="ordered locus">BDI_2732</name>
</gene>
<evidence type="ECO:0000255" key="1">
    <source>
        <dbReference type="HAMAP-Rule" id="MF_00338"/>
    </source>
</evidence>
<reference key="1">
    <citation type="journal article" date="2007" name="PLoS Biol.">
        <title>Evolution of symbiotic bacteria in the distal human intestine.</title>
        <authorList>
            <person name="Xu J."/>
            <person name="Mahowald M.A."/>
            <person name="Ley R.E."/>
            <person name="Lozupone C.A."/>
            <person name="Hamady M."/>
            <person name="Martens E.C."/>
            <person name="Henrissat B."/>
            <person name="Coutinho P.M."/>
            <person name="Minx P."/>
            <person name="Latreille P."/>
            <person name="Cordum H."/>
            <person name="Van Brunt A."/>
            <person name="Kim K."/>
            <person name="Fulton R.S."/>
            <person name="Fulton L.A."/>
            <person name="Clifton S.W."/>
            <person name="Wilson R.K."/>
            <person name="Knight R.D."/>
            <person name="Gordon J.I."/>
        </authorList>
    </citation>
    <scope>NUCLEOTIDE SEQUENCE [LARGE SCALE GENOMIC DNA]</scope>
    <source>
        <strain>ATCC 8503 / DSM 20701 / CIP 104284 / JCM 5825 / NCTC 11152</strain>
    </source>
</reference>